<comment type="function">
    <text evidence="2">Multidrug efflux pump that functions probably as a Na(+)/drug antiporter.</text>
</comment>
<comment type="subcellular location">
    <subcellularLocation>
        <location evidence="2">Cell inner membrane</location>
        <topology evidence="2">Multi-pass membrane protein</topology>
    </subcellularLocation>
</comment>
<comment type="similarity">
    <text evidence="2">Belongs to the multi antimicrobial extrusion (MATE) (TC 2.A.66.1) family. MdtK subfamily.</text>
</comment>
<dbReference type="EMBL" id="CP000038">
    <property type="protein sequence ID" value="AAZ88194.1"/>
    <property type="molecule type" value="Genomic_DNA"/>
</dbReference>
<dbReference type="RefSeq" id="WP_001174943.1">
    <property type="nucleotide sequence ID" value="NC_007384.1"/>
</dbReference>
<dbReference type="SMR" id="Q3Z218"/>
<dbReference type="KEGG" id="ssn:SSON_1493"/>
<dbReference type="HOGENOM" id="CLU_012893_6_0_6"/>
<dbReference type="Proteomes" id="UP000002529">
    <property type="component" value="Chromosome"/>
</dbReference>
<dbReference type="GO" id="GO:0005886">
    <property type="term" value="C:plasma membrane"/>
    <property type="evidence" value="ECO:0007669"/>
    <property type="project" value="UniProtKB-SubCell"/>
</dbReference>
<dbReference type="GO" id="GO:0015297">
    <property type="term" value="F:antiporter activity"/>
    <property type="evidence" value="ECO:0007669"/>
    <property type="project" value="UniProtKB-UniRule"/>
</dbReference>
<dbReference type="GO" id="GO:0042910">
    <property type="term" value="F:xenobiotic transmembrane transporter activity"/>
    <property type="evidence" value="ECO:0007669"/>
    <property type="project" value="UniProtKB-UniRule"/>
</dbReference>
<dbReference type="GO" id="GO:0006814">
    <property type="term" value="P:sodium ion transport"/>
    <property type="evidence" value="ECO:0007669"/>
    <property type="project" value="UniProtKB-UniRule"/>
</dbReference>
<dbReference type="GO" id="GO:0006855">
    <property type="term" value="P:xenobiotic transmembrane transport"/>
    <property type="evidence" value="ECO:0007669"/>
    <property type="project" value="UniProtKB-UniRule"/>
</dbReference>
<dbReference type="CDD" id="cd13131">
    <property type="entry name" value="MATE_NorM_like"/>
    <property type="match status" value="1"/>
</dbReference>
<dbReference type="HAMAP" id="MF_00400">
    <property type="entry name" value="MdtK"/>
    <property type="match status" value="1"/>
</dbReference>
<dbReference type="InterPro" id="IPR002528">
    <property type="entry name" value="MATE_fam"/>
</dbReference>
<dbReference type="InterPro" id="IPR050222">
    <property type="entry name" value="MATE_MdtK"/>
</dbReference>
<dbReference type="InterPro" id="IPR048279">
    <property type="entry name" value="MdtK-like"/>
</dbReference>
<dbReference type="InterPro" id="IPR022913">
    <property type="entry name" value="Multidrug-R_MdtK"/>
</dbReference>
<dbReference type="NCBIfam" id="TIGR00797">
    <property type="entry name" value="matE"/>
    <property type="match status" value="1"/>
</dbReference>
<dbReference type="PANTHER" id="PTHR43298:SF2">
    <property type="entry name" value="FMN_FAD EXPORTER YEEO-RELATED"/>
    <property type="match status" value="1"/>
</dbReference>
<dbReference type="PANTHER" id="PTHR43298">
    <property type="entry name" value="MULTIDRUG RESISTANCE PROTEIN NORM-RELATED"/>
    <property type="match status" value="1"/>
</dbReference>
<dbReference type="Pfam" id="PF01554">
    <property type="entry name" value="MatE"/>
    <property type="match status" value="2"/>
</dbReference>
<dbReference type="PIRSF" id="PIRSF006603">
    <property type="entry name" value="DinF"/>
    <property type="match status" value="1"/>
</dbReference>
<sequence length="457" mass="49465">MQKYISEARLLLALAIPVILAQIAQTAMGFVDTVMAGGYSATDMAAVAIGTSIWLPAILFGHGLLLALTPVIAQLNGSGRRERIAHQVRQGFWLAGFVSVLIMLVLWNAGYIIRSMENIDPALADKAVGYLRALLWGAPGYLFFQVARNQCEGLAKTKPGMVMGFIGLLVNIPVNYIFIYGHFGMPELGGVGCGVATAAVYWVMFLAMVSYIKRARSMRDIRNEKGTAKPDPAVMKRLIQLGLPIALALFFEVTLFAVVALLVSPLGIVDVAGHQIALNFSSLMFVLPMSLAAAVTIRVGYRLGQGSTLDAQTAARTGLMVGVCMATLTAIFTVSLREQIALLYNDNPEVVTLAAHLMLLAAVYQISDSIQVIGSGILRGYKDTRSIFYITFTAYWVLGLPSGYILALTDLVVEPMGPAGFWIGFIIGLTSAAIMMMLRMRFLQRMPSAIILQRASR</sequence>
<reference key="1">
    <citation type="journal article" date="2005" name="Nucleic Acids Res.">
        <title>Genome dynamics and diversity of Shigella species, the etiologic agents of bacillary dysentery.</title>
        <authorList>
            <person name="Yang F."/>
            <person name="Yang J."/>
            <person name="Zhang X."/>
            <person name="Chen L."/>
            <person name="Jiang Y."/>
            <person name="Yan Y."/>
            <person name="Tang X."/>
            <person name="Wang J."/>
            <person name="Xiong Z."/>
            <person name="Dong J."/>
            <person name="Xue Y."/>
            <person name="Zhu Y."/>
            <person name="Xu X."/>
            <person name="Sun L."/>
            <person name="Chen S."/>
            <person name="Nie H."/>
            <person name="Peng J."/>
            <person name="Xu J."/>
            <person name="Wang Y."/>
            <person name="Yuan Z."/>
            <person name="Wen Y."/>
            <person name="Yao Z."/>
            <person name="Shen Y."/>
            <person name="Qiang B."/>
            <person name="Hou Y."/>
            <person name="Yu J."/>
            <person name="Jin Q."/>
        </authorList>
    </citation>
    <scope>NUCLEOTIDE SEQUENCE [LARGE SCALE GENOMIC DNA]</scope>
    <source>
        <strain>Ss046</strain>
    </source>
</reference>
<organism>
    <name type="scientific">Shigella sonnei (strain Ss046)</name>
    <dbReference type="NCBI Taxonomy" id="300269"/>
    <lineage>
        <taxon>Bacteria</taxon>
        <taxon>Pseudomonadati</taxon>
        <taxon>Pseudomonadota</taxon>
        <taxon>Gammaproteobacteria</taxon>
        <taxon>Enterobacterales</taxon>
        <taxon>Enterobacteriaceae</taxon>
        <taxon>Shigella</taxon>
    </lineage>
</organism>
<protein>
    <recommendedName>
        <fullName evidence="2">Multidrug resistance protein MdtK</fullName>
    </recommendedName>
    <alternativeName>
        <fullName evidence="2">Multidrug-efflux transporter</fullName>
    </alternativeName>
</protein>
<gene>
    <name evidence="2" type="primary">mdtK</name>
    <name type="ordered locus">SSON_1493</name>
</gene>
<proteinExistence type="inferred from homology"/>
<evidence type="ECO:0000255" key="1"/>
<evidence type="ECO:0000255" key="2">
    <source>
        <dbReference type="HAMAP-Rule" id="MF_00400"/>
    </source>
</evidence>
<name>MDTK_SHISS</name>
<feature type="chain" id="PRO_0000279855" description="Multidrug resistance protein MdtK">
    <location>
        <begin position="1"/>
        <end position="457"/>
    </location>
</feature>
<feature type="topological domain" description="Cytoplasmic" evidence="1">
    <location>
        <begin position="1"/>
        <end position="10"/>
    </location>
</feature>
<feature type="transmembrane region" description="Helical" evidence="2">
    <location>
        <begin position="11"/>
        <end position="31"/>
    </location>
</feature>
<feature type="topological domain" description="Periplasmic" evidence="1">
    <location>
        <begin position="32"/>
        <end position="52"/>
    </location>
</feature>
<feature type="transmembrane region" description="Helical" evidence="2">
    <location>
        <begin position="53"/>
        <end position="73"/>
    </location>
</feature>
<feature type="topological domain" description="Cytoplasmic" evidence="1">
    <location>
        <begin position="74"/>
        <end position="92"/>
    </location>
</feature>
<feature type="transmembrane region" description="Helical" evidence="2">
    <location>
        <begin position="93"/>
        <end position="113"/>
    </location>
</feature>
<feature type="topological domain" description="Periplasmic" evidence="1">
    <location>
        <begin position="114"/>
        <end position="126"/>
    </location>
</feature>
<feature type="transmembrane region" description="Helical" evidence="2">
    <location>
        <begin position="127"/>
        <end position="147"/>
    </location>
</feature>
<feature type="topological domain" description="Cytoplasmic" evidence="1">
    <location>
        <begin position="148"/>
        <end position="159"/>
    </location>
</feature>
<feature type="transmembrane region" description="Helical" evidence="2">
    <location>
        <begin position="160"/>
        <end position="180"/>
    </location>
</feature>
<feature type="topological domain" description="Periplasmic" evidence="1">
    <location>
        <begin position="181"/>
        <end position="188"/>
    </location>
</feature>
<feature type="transmembrane region" description="Helical" evidence="2">
    <location>
        <begin position="189"/>
        <end position="209"/>
    </location>
</feature>
<feature type="topological domain" description="Cytoplasmic" evidence="1">
    <location>
        <begin position="210"/>
        <end position="242"/>
    </location>
</feature>
<feature type="transmembrane region" description="Helical" evidence="2">
    <location>
        <begin position="243"/>
        <end position="263"/>
    </location>
</feature>
<feature type="topological domain" description="Periplasmic" evidence="1">
    <location>
        <begin position="264"/>
        <end position="275"/>
    </location>
</feature>
<feature type="transmembrane region" description="Helical" evidence="2">
    <location>
        <begin position="276"/>
        <end position="296"/>
    </location>
</feature>
<feature type="topological domain" description="Cytoplasmic" evidence="1">
    <location>
        <begin position="297"/>
        <end position="313"/>
    </location>
</feature>
<feature type="transmembrane region" description="Helical" evidence="2">
    <location>
        <begin position="314"/>
        <end position="334"/>
    </location>
</feature>
<feature type="topological domain" description="Periplasmic" evidence="1">
    <location>
        <begin position="335"/>
        <end position="349"/>
    </location>
</feature>
<feature type="transmembrane region" description="Helical" evidence="2">
    <location>
        <begin position="350"/>
        <end position="370"/>
    </location>
</feature>
<feature type="topological domain" description="Cytoplasmic" evidence="1">
    <location>
        <begin position="371"/>
        <end position="386"/>
    </location>
</feature>
<feature type="transmembrane region" description="Helical" evidence="2">
    <location>
        <begin position="387"/>
        <end position="407"/>
    </location>
</feature>
<feature type="topological domain" description="Periplasmic" evidence="1">
    <location>
        <begin position="408"/>
        <end position="417"/>
    </location>
</feature>
<feature type="transmembrane region" description="Helical" evidence="2">
    <location>
        <begin position="418"/>
        <end position="438"/>
    </location>
</feature>
<feature type="topological domain" description="Cytoplasmic" evidence="1">
    <location>
        <begin position="439"/>
        <end position="457"/>
    </location>
</feature>
<accession>Q3Z218</accession>
<keyword id="KW-0050">Antiport</keyword>
<keyword id="KW-0997">Cell inner membrane</keyword>
<keyword id="KW-1003">Cell membrane</keyword>
<keyword id="KW-0406">Ion transport</keyword>
<keyword id="KW-0472">Membrane</keyword>
<keyword id="KW-1185">Reference proteome</keyword>
<keyword id="KW-0915">Sodium</keyword>
<keyword id="KW-0739">Sodium transport</keyword>
<keyword id="KW-0812">Transmembrane</keyword>
<keyword id="KW-1133">Transmembrane helix</keyword>
<keyword id="KW-0813">Transport</keyword>